<protein>
    <recommendedName>
        <fullName evidence="1">ATP synthase subunit delta</fullName>
    </recommendedName>
    <alternativeName>
        <fullName evidence="1">ATP synthase F(1) sector subunit delta</fullName>
    </alternativeName>
    <alternativeName>
        <fullName evidence="1">F-type ATPase subunit delta</fullName>
        <shortName evidence="1">F-ATPase subunit delta</shortName>
    </alternativeName>
</protein>
<evidence type="ECO:0000255" key="1">
    <source>
        <dbReference type="HAMAP-Rule" id="MF_01416"/>
    </source>
</evidence>
<proteinExistence type="inferred from homology"/>
<comment type="function">
    <text evidence="1">F(1)F(0) ATP synthase produces ATP from ADP in the presence of a proton or sodium gradient. F-type ATPases consist of two structural domains, F(1) containing the extramembraneous catalytic core and F(0) containing the membrane proton channel, linked together by a central stalk and a peripheral stalk. During catalysis, ATP synthesis in the catalytic domain of F(1) is coupled via a rotary mechanism of the central stalk subunits to proton translocation.</text>
</comment>
<comment type="function">
    <text evidence="1">This protein is part of the stalk that links CF(0) to CF(1). It either transmits conformational changes from CF(0) to CF(1) or is implicated in proton conduction.</text>
</comment>
<comment type="subunit">
    <text evidence="1">F-type ATPases have 2 components, F(1) - the catalytic core - and F(0) - the membrane proton channel. F(1) has five subunits: alpha(3), beta(3), gamma(1), delta(1), epsilon(1). F(0) has three main subunits: a(1), b(2) and c(10-14). The alpha and beta chains form an alternating ring which encloses part of the gamma chain. F(1) is attached to F(0) by a central stalk formed by the gamma and epsilon chains, while a peripheral stalk is formed by the delta and b chains.</text>
</comment>
<comment type="subcellular location">
    <subcellularLocation>
        <location evidence="1">Cell membrane</location>
        <topology evidence="1">Peripheral membrane protein</topology>
    </subcellularLocation>
</comment>
<comment type="similarity">
    <text evidence="1">Belongs to the ATPase delta chain family.</text>
</comment>
<keyword id="KW-0066">ATP synthesis</keyword>
<keyword id="KW-1003">Cell membrane</keyword>
<keyword id="KW-0139">CF(1)</keyword>
<keyword id="KW-0375">Hydrogen ion transport</keyword>
<keyword id="KW-0406">Ion transport</keyword>
<keyword id="KW-0472">Membrane</keyword>
<keyword id="KW-0813">Transport</keyword>
<gene>
    <name evidence="1" type="primary">atpH</name>
    <name type="ordered locus">STER_0518</name>
</gene>
<name>ATPD_STRTD</name>
<feature type="chain" id="PRO_0000371168" description="ATP synthase subunit delta">
    <location>
        <begin position="1"/>
        <end position="178"/>
    </location>
</feature>
<dbReference type="EMBL" id="CP000419">
    <property type="protein sequence ID" value="ABJ65796.1"/>
    <property type="molecule type" value="Genomic_DNA"/>
</dbReference>
<dbReference type="RefSeq" id="WP_011225595.1">
    <property type="nucleotide sequence ID" value="NC_008532.1"/>
</dbReference>
<dbReference type="SMR" id="Q03LX6"/>
<dbReference type="KEGG" id="ste:STER_0518"/>
<dbReference type="HOGENOM" id="CLU_085114_1_2_9"/>
<dbReference type="GO" id="GO:0005886">
    <property type="term" value="C:plasma membrane"/>
    <property type="evidence" value="ECO:0007669"/>
    <property type="project" value="UniProtKB-SubCell"/>
</dbReference>
<dbReference type="GO" id="GO:0045259">
    <property type="term" value="C:proton-transporting ATP synthase complex"/>
    <property type="evidence" value="ECO:0007669"/>
    <property type="project" value="UniProtKB-KW"/>
</dbReference>
<dbReference type="GO" id="GO:0046933">
    <property type="term" value="F:proton-transporting ATP synthase activity, rotational mechanism"/>
    <property type="evidence" value="ECO:0007669"/>
    <property type="project" value="UniProtKB-UniRule"/>
</dbReference>
<dbReference type="Gene3D" id="1.10.520.20">
    <property type="entry name" value="N-terminal domain of the delta subunit of the F1F0-ATP synthase"/>
    <property type="match status" value="1"/>
</dbReference>
<dbReference type="HAMAP" id="MF_01416">
    <property type="entry name" value="ATP_synth_delta_bact"/>
    <property type="match status" value="1"/>
</dbReference>
<dbReference type="InterPro" id="IPR026015">
    <property type="entry name" value="ATP_synth_OSCP/delta_N_sf"/>
</dbReference>
<dbReference type="InterPro" id="IPR000711">
    <property type="entry name" value="ATPase_OSCP/dsu"/>
</dbReference>
<dbReference type="NCBIfam" id="TIGR01145">
    <property type="entry name" value="ATP_synt_delta"/>
    <property type="match status" value="1"/>
</dbReference>
<dbReference type="NCBIfam" id="NF004401">
    <property type="entry name" value="PRK05758.2-1"/>
    <property type="match status" value="1"/>
</dbReference>
<dbReference type="PANTHER" id="PTHR11910">
    <property type="entry name" value="ATP SYNTHASE DELTA CHAIN"/>
    <property type="match status" value="1"/>
</dbReference>
<dbReference type="Pfam" id="PF00213">
    <property type="entry name" value="OSCP"/>
    <property type="match status" value="1"/>
</dbReference>
<dbReference type="PRINTS" id="PR00125">
    <property type="entry name" value="ATPASEDELTA"/>
</dbReference>
<dbReference type="SUPFAM" id="SSF47928">
    <property type="entry name" value="N-terminal domain of the delta subunit of the F1F0-ATP synthase"/>
    <property type="match status" value="1"/>
</dbReference>
<reference key="1">
    <citation type="journal article" date="2006" name="Proc. Natl. Acad. Sci. U.S.A.">
        <title>Comparative genomics of the lactic acid bacteria.</title>
        <authorList>
            <person name="Makarova K.S."/>
            <person name="Slesarev A."/>
            <person name="Wolf Y.I."/>
            <person name="Sorokin A."/>
            <person name="Mirkin B."/>
            <person name="Koonin E.V."/>
            <person name="Pavlov A."/>
            <person name="Pavlova N."/>
            <person name="Karamychev V."/>
            <person name="Polouchine N."/>
            <person name="Shakhova V."/>
            <person name="Grigoriev I."/>
            <person name="Lou Y."/>
            <person name="Rohksar D."/>
            <person name="Lucas S."/>
            <person name="Huang K."/>
            <person name="Goodstein D.M."/>
            <person name="Hawkins T."/>
            <person name="Plengvidhya V."/>
            <person name="Welker D."/>
            <person name="Hughes J."/>
            <person name="Goh Y."/>
            <person name="Benson A."/>
            <person name="Baldwin K."/>
            <person name="Lee J.-H."/>
            <person name="Diaz-Muniz I."/>
            <person name="Dosti B."/>
            <person name="Smeianov V."/>
            <person name="Wechter W."/>
            <person name="Barabote R."/>
            <person name="Lorca G."/>
            <person name="Altermann E."/>
            <person name="Barrangou R."/>
            <person name="Ganesan B."/>
            <person name="Xie Y."/>
            <person name="Rawsthorne H."/>
            <person name="Tamir D."/>
            <person name="Parker C."/>
            <person name="Breidt F."/>
            <person name="Broadbent J.R."/>
            <person name="Hutkins R."/>
            <person name="O'Sullivan D."/>
            <person name="Steele J."/>
            <person name="Unlu G."/>
            <person name="Saier M.H. Jr."/>
            <person name="Klaenhammer T."/>
            <person name="Richardson P."/>
            <person name="Kozyavkin S."/>
            <person name="Weimer B.C."/>
            <person name="Mills D.A."/>
        </authorList>
    </citation>
    <scope>NUCLEOTIDE SEQUENCE [LARGE SCALE GENOMIC DNA]</scope>
    <source>
        <strain>ATCC BAA-491 / LMD-9</strain>
    </source>
</reference>
<accession>Q03LX6</accession>
<organism>
    <name type="scientific">Streptococcus thermophilus (strain ATCC BAA-491 / LMD-9)</name>
    <dbReference type="NCBI Taxonomy" id="322159"/>
    <lineage>
        <taxon>Bacteria</taxon>
        <taxon>Bacillati</taxon>
        <taxon>Bacillota</taxon>
        <taxon>Bacilli</taxon>
        <taxon>Lactobacillales</taxon>
        <taxon>Streptococcaceae</taxon>
        <taxon>Streptococcus</taxon>
    </lineage>
</organism>
<sequence>MDKKTQALVEQYARSLVEVAFEQDAVSTIQEEVRQILTVFAETNLKTFLSQVNVTSEAKKESLSFFQESCSVYMNNFLEVISLNDRANILYDVLKLVLELFDQEDNTYDVTVTSASPLSEEQKTRLLTIVSQKFEIKTRRLVEKIDEELIGGFVIKAKNKFVDTSIRSQLQAFKMNLK</sequence>